<gene>
    <name evidence="1" type="primary">mdh</name>
    <name type="ordered locus">PsycPRwf_1873</name>
</gene>
<name>MDH_PSYWF</name>
<comment type="function">
    <text evidence="1">Catalyzes the reversible oxidation of malate to oxaloacetate.</text>
</comment>
<comment type="catalytic activity">
    <reaction evidence="1">
        <text>(S)-malate + NAD(+) = oxaloacetate + NADH + H(+)</text>
        <dbReference type="Rhea" id="RHEA:21432"/>
        <dbReference type="ChEBI" id="CHEBI:15378"/>
        <dbReference type="ChEBI" id="CHEBI:15589"/>
        <dbReference type="ChEBI" id="CHEBI:16452"/>
        <dbReference type="ChEBI" id="CHEBI:57540"/>
        <dbReference type="ChEBI" id="CHEBI:57945"/>
        <dbReference type="EC" id="1.1.1.37"/>
    </reaction>
</comment>
<comment type="similarity">
    <text evidence="1">Belongs to the LDH/MDH superfamily. MDH type 2 family.</text>
</comment>
<feature type="chain" id="PRO_0000319846" description="Malate dehydrogenase">
    <location>
        <begin position="1"/>
        <end position="327"/>
    </location>
</feature>
<feature type="region of interest" description="Disordered" evidence="2">
    <location>
        <begin position="304"/>
        <end position="327"/>
    </location>
</feature>
<feature type="active site" description="Proton acceptor" evidence="1">
    <location>
        <position position="187"/>
    </location>
</feature>
<feature type="binding site" evidence="1">
    <location>
        <begin position="11"/>
        <end position="17"/>
    </location>
    <ligand>
        <name>NAD(+)</name>
        <dbReference type="ChEBI" id="CHEBI:57540"/>
    </ligand>
</feature>
<feature type="binding site" evidence="1">
    <location>
        <position position="92"/>
    </location>
    <ligand>
        <name>substrate</name>
    </ligand>
</feature>
<feature type="binding site" evidence="1">
    <location>
        <position position="98"/>
    </location>
    <ligand>
        <name>substrate</name>
    </ligand>
</feature>
<feature type="binding site" evidence="1">
    <location>
        <position position="105"/>
    </location>
    <ligand>
        <name>NAD(+)</name>
        <dbReference type="ChEBI" id="CHEBI:57540"/>
    </ligand>
</feature>
<feature type="binding site" evidence="1">
    <location>
        <position position="112"/>
    </location>
    <ligand>
        <name>NAD(+)</name>
        <dbReference type="ChEBI" id="CHEBI:57540"/>
    </ligand>
</feature>
<feature type="binding site" evidence="1">
    <location>
        <begin position="129"/>
        <end position="131"/>
    </location>
    <ligand>
        <name>NAD(+)</name>
        <dbReference type="ChEBI" id="CHEBI:57540"/>
    </ligand>
</feature>
<feature type="binding site" evidence="1">
    <location>
        <position position="131"/>
    </location>
    <ligand>
        <name>substrate</name>
    </ligand>
</feature>
<feature type="binding site" evidence="1">
    <location>
        <position position="162"/>
    </location>
    <ligand>
        <name>substrate</name>
    </ligand>
</feature>
<sequence>MKQPVRVAVTGAAGNISYAMLFRIASGEMLGKDQPVILQLLEITPALDALKGVVMELEDCAFPLLAGVVQTDDATVAFKDADYALLVGARPRGPGMERKDLLEANAAIFSAQGKALNEVASRDVKVLVVGNPANTNALIAQRNAPDLDPRNFTAMTRLDHNRGMAQLAEETNSTVNDVKKMIIWGNHSSTQYPDLTECTVNGKPALEQVDRDWYENSYIPSVQKRGAAIIEARGASSAASAANAAIAHMRTWALGTDENDWVSMGVYSQGEYGIAKGLIYSFPCTCSNGDWKIVEGLDTSSDFSQEKMKATEQELSEERDAVEHLLP</sequence>
<evidence type="ECO:0000255" key="1">
    <source>
        <dbReference type="HAMAP-Rule" id="MF_01517"/>
    </source>
</evidence>
<evidence type="ECO:0000256" key="2">
    <source>
        <dbReference type="SAM" id="MobiDB-lite"/>
    </source>
</evidence>
<protein>
    <recommendedName>
        <fullName evidence="1">Malate dehydrogenase</fullName>
        <ecNumber evidence="1">1.1.1.37</ecNumber>
    </recommendedName>
</protein>
<organism>
    <name type="scientific">Psychrobacter sp. (strain PRwf-1)</name>
    <dbReference type="NCBI Taxonomy" id="349106"/>
    <lineage>
        <taxon>Bacteria</taxon>
        <taxon>Pseudomonadati</taxon>
        <taxon>Pseudomonadota</taxon>
        <taxon>Gammaproteobacteria</taxon>
        <taxon>Moraxellales</taxon>
        <taxon>Moraxellaceae</taxon>
        <taxon>Psychrobacter</taxon>
    </lineage>
</organism>
<proteinExistence type="inferred from homology"/>
<accession>A5WGM2</accession>
<dbReference type="EC" id="1.1.1.37" evidence="1"/>
<dbReference type="EMBL" id="CP000713">
    <property type="protein sequence ID" value="ABQ94813.1"/>
    <property type="molecule type" value="Genomic_DNA"/>
</dbReference>
<dbReference type="SMR" id="A5WGM2"/>
<dbReference type="STRING" id="349106.PsycPRwf_1873"/>
<dbReference type="KEGG" id="prw:PsycPRwf_1873"/>
<dbReference type="eggNOG" id="COG0039">
    <property type="taxonomic scope" value="Bacteria"/>
</dbReference>
<dbReference type="HOGENOM" id="CLU_040727_2_0_6"/>
<dbReference type="GO" id="GO:0030060">
    <property type="term" value="F:L-malate dehydrogenase (NAD+) activity"/>
    <property type="evidence" value="ECO:0007669"/>
    <property type="project" value="UniProtKB-UniRule"/>
</dbReference>
<dbReference type="GO" id="GO:0006108">
    <property type="term" value="P:malate metabolic process"/>
    <property type="evidence" value="ECO:0007669"/>
    <property type="project" value="InterPro"/>
</dbReference>
<dbReference type="GO" id="GO:0006099">
    <property type="term" value="P:tricarboxylic acid cycle"/>
    <property type="evidence" value="ECO:0007669"/>
    <property type="project" value="UniProtKB-UniRule"/>
</dbReference>
<dbReference type="CDD" id="cd01338">
    <property type="entry name" value="MDH_chloroplast-like"/>
    <property type="match status" value="1"/>
</dbReference>
<dbReference type="FunFam" id="3.40.50.720:FF:000010">
    <property type="entry name" value="Malate dehydrogenase"/>
    <property type="match status" value="1"/>
</dbReference>
<dbReference type="FunFam" id="3.90.110.10:FF:000002">
    <property type="entry name" value="Malate dehydrogenase"/>
    <property type="match status" value="1"/>
</dbReference>
<dbReference type="Gene3D" id="3.90.110.10">
    <property type="entry name" value="Lactate dehydrogenase/glycoside hydrolase, family 4, C-terminal"/>
    <property type="match status" value="1"/>
</dbReference>
<dbReference type="Gene3D" id="3.40.50.720">
    <property type="entry name" value="NAD(P)-binding Rossmann-like Domain"/>
    <property type="match status" value="1"/>
</dbReference>
<dbReference type="HAMAP" id="MF_01517">
    <property type="entry name" value="Malate_dehydrog_2"/>
    <property type="match status" value="1"/>
</dbReference>
<dbReference type="InterPro" id="IPR001557">
    <property type="entry name" value="L-lactate/malate_DH"/>
</dbReference>
<dbReference type="InterPro" id="IPR022383">
    <property type="entry name" value="Lactate/malate_DH_C"/>
</dbReference>
<dbReference type="InterPro" id="IPR001236">
    <property type="entry name" value="Lactate/malate_DH_N"/>
</dbReference>
<dbReference type="InterPro" id="IPR015955">
    <property type="entry name" value="Lactate_DH/Glyco_Ohase_4_C"/>
</dbReference>
<dbReference type="InterPro" id="IPR010945">
    <property type="entry name" value="Malate_DH_type2"/>
</dbReference>
<dbReference type="InterPro" id="IPR036291">
    <property type="entry name" value="NAD(P)-bd_dom_sf"/>
</dbReference>
<dbReference type="NCBIfam" id="TIGR01759">
    <property type="entry name" value="MalateDH-SF1"/>
    <property type="match status" value="1"/>
</dbReference>
<dbReference type="NCBIfam" id="NF003916">
    <property type="entry name" value="PRK05442.1"/>
    <property type="match status" value="1"/>
</dbReference>
<dbReference type="PANTHER" id="PTHR23382">
    <property type="entry name" value="MALATE DEHYDROGENASE"/>
    <property type="match status" value="1"/>
</dbReference>
<dbReference type="Pfam" id="PF02866">
    <property type="entry name" value="Ldh_1_C"/>
    <property type="match status" value="1"/>
</dbReference>
<dbReference type="Pfam" id="PF00056">
    <property type="entry name" value="Ldh_1_N"/>
    <property type="match status" value="1"/>
</dbReference>
<dbReference type="PIRSF" id="PIRSF000102">
    <property type="entry name" value="Lac_mal_DH"/>
    <property type="match status" value="1"/>
</dbReference>
<dbReference type="SUPFAM" id="SSF56327">
    <property type="entry name" value="LDH C-terminal domain-like"/>
    <property type="match status" value="1"/>
</dbReference>
<dbReference type="SUPFAM" id="SSF51735">
    <property type="entry name" value="NAD(P)-binding Rossmann-fold domains"/>
    <property type="match status" value="1"/>
</dbReference>
<reference key="1">
    <citation type="submission" date="2007-05" db="EMBL/GenBank/DDBJ databases">
        <title>Complete sequence of chromosome of Psychrobacter sp. PRwf-1.</title>
        <authorList>
            <consortium name="US DOE Joint Genome Institute"/>
            <person name="Copeland A."/>
            <person name="Lucas S."/>
            <person name="Lapidus A."/>
            <person name="Barry K."/>
            <person name="Detter J.C."/>
            <person name="Glavina del Rio T."/>
            <person name="Hammon N."/>
            <person name="Israni S."/>
            <person name="Dalin E."/>
            <person name="Tice H."/>
            <person name="Pitluck S."/>
            <person name="Chain P."/>
            <person name="Malfatti S."/>
            <person name="Shin M."/>
            <person name="Vergez L."/>
            <person name="Schmutz J."/>
            <person name="Larimer F."/>
            <person name="Land M."/>
            <person name="Hauser L."/>
            <person name="Kyrpides N."/>
            <person name="Kim E."/>
            <person name="Tiedje J."/>
            <person name="Richardson P."/>
        </authorList>
    </citation>
    <scope>NUCLEOTIDE SEQUENCE [LARGE SCALE GENOMIC DNA]</scope>
    <source>
        <strain>PRwf-1</strain>
    </source>
</reference>
<keyword id="KW-0520">NAD</keyword>
<keyword id="KW-0560">Oxidoreductase</keyword>
<keyword id="KW-0816">Tricarboxylic acid cycle</keyword>